<gene>
    <name type="ORF">CNAG_01018</name>
</gene>
<accession>J9VR81</accession>
<keyword id="KW-0963">Cytoplasm</keyword>
<keyword id="KW-0342">GTP-binding</keyword>
<keyword id="KW-0378">Hydrolase</keyword>
<keyword id="KW-0396">Initiation factor</keyword>
<keyword id="KW-0489">Methyltransferase</keyword>
<keyword id="KW-0547">Nucleotide-binding</keyword>
<keyword id="KW-0597">Phosphoprotein</keyword>
<keyword id="KW-0648">Protein biosynthesis</keyword>
<keyword id="KW-0808">Transferase</keyword>
<organism>
    <name type="scientific">Cryptococcus neoformans var. grubii serotype A (strain H99 / ATCC 208821 / CBS 10515 / FGSC 9487)</name>
    <name type="common">Filobasidiella neoformans var. grubii</name>
    <dbReference type="NCBI Taxonomy" id="235443"/>
    <lineage>
        <taxon>Eukaryota</taxon>
        <taxon>Fungi</taxon>
        <taxon>Dikarya</taxon>
        <taxon>Basidiomycota</taxon>
        <taxon>Agaricomycotina</taxon>
        <taxon>Tremellomycetes</taxon>
        <taxon>Tremellales</taxon>
        <taxon>Cryptococcaceae</taxon>
        <taxon>Cryptococcus</taxon>
        <taxon>Cryptococcus neoformans species complex</taxon>
    </lineage>
</organism>
<proteinExistence type="evidence at transcript level"/>
<comment type="function">
    <text evidence="1">As a subunit of eukaryotic initiation factor 2 eIF2, involved in the early steps of protein synthesis. In the presence of GTP, eIF-2 forms a ternary complex with initiator tRNA Met-tRNAi and then recruits the 40S ribosomal complex and initiation factors eIF-1, eIF-1A and eIF-3 to form the 43S pre-initiation complex (43S PIC), a step that determines the rate of protein translation. The 43S PIC binds to mRNA and scans downstream to the initiation codon, where it forms a 48S initiation complex by codon-anticodon base pairing. This leads to the displacement of eIF-1 to allow GTPase-activating protein (GAP) eIF-5-mediated hydrolysis of eIF2-bound GTP. Hydrolysis of GTP and release of Pi, which makes GTP hydrolysis irreversible, causes the release of the eIF-2-GDP binary complex from the 40S subunit, an event that is essential for the subsequent joining of the 60S ribosomal subunit to form an elongation-competent 80S ribosome. In order for eIF-2 to recycle and catalyze another round of initiation, the GDP bound to eIF-2 must be exchanged with GTP by way of a reaction catalyzed by GDP-GTP exchange factor (GEF) eIF-2B.</text>
</comment>
<comment type="catalytic activity">
    <reaction evidence="1">
        <text>GTP + H2O = GDP + phosphate + H(+)</text>
        <dbReference type="Rhea" id="RHEA:19669"/>
        <dbReference type="ChEBI" id="CHEBI:15377"/>
        <dbReference type="ChEBI" id="CHEBI:15378"/>
        <dbReference type="ChEBI" id="CHEBI:37565"/>
        <dbReference type="ChEBI" id="CHEBI:43474"/>
        <dbReference type="ChEBI" id="CHEBI:58189"/>
        <dbReference type="EC" id="3.6.5.3"/>
    </reaction>
</comment>
<comment type="subunit">
    <text evidence="1">Eukaryotic translation initiation factor 2 eIF2 is a heterotrimeric complex composed of an alpha, a beta and a gamma subunit. The factors eIF-1, eIF-2, eIF-3, TIF5/eIF-5 and methionyl-tRNAi form a multifactor complex (MFC) that may bind to the 40S ribosome.</text>
</comment>
<comment type="subcellular location">
    <subcellularLocation>
        <location evidence="2">Cytoplasm</location>
        <location evidence="2">Cytosol</location>
    </subcellularLocation>
</comment>
<comment type="induction">
    <text evidence="4">Transcriptionally up-regulated in an HDA1-dependent manner.</text>
</comment>
<comment type="similarity">
    <text evidence="3">Belongs to the TRAFAC class translation factor GTPase superfamily. Classic translation factor GTPase family. EIF2G subfamily.</text>
</comment>
<dbReference type="EC" id="3.6.5.3" evidence="1"/>
<dbReference type="EMBL" id="CP003824">
    <property type="protein sequence ID" value="AFR95129.1"/>
    <property type="molecule type" value="Genomic_DNA"/>
</dbReference>
<dbReference type="RefSeq" id="XP_012049258.1">
    <property type="nucleotide sequence ID" value="XM_012193868.1"/>
</dbReference>
<dbReference type="SMR" id="J9VR81"/>
<dbReference type="SwissPalm" id="J9VR81"/>
<dbReference type="GeneID" id="23884764"/>
<dbReference type="KEGG" id="cng:CNAG_01018"/>
<dbReference type="VEuPathDB" id="FungiDB:CNAG_01018"/>
<dbReference type="HOGENOM" id="CLU_027154_0_1_1"/>
<dbReference type="OrthoDB" id="1089at5206"/>
<dbReference type="Proteomes" id="UP000010091">
    <property type="component" value="Chromosome 5"/>
</dbReference>
<dbReference type="GO" id="GO:0005829">
    <property type="term" value="C:cytosol"/>
    <property type="evidence" value="ECO:0007669"/>
    <property type="project" value="UniProtKB-SubCell"/>
</dbReference>
<dbReference type="GO" id="GO:0005850">
    <property type="term" value="C:eukaryotic translation initiation factor 2 complex"/>
    <property type="evidence" value="ECO:0000250"/>
    <property type="project" value="UniProtKB"/>
</dbReference>
<dbReference type="GO" id="GO:0005525">
    <property type="term" value="F:GTP binding"/>
    <property type="evidence" value="ECO:0007669"/>
    <property type="project" value="UniProtKB-KW"/>
</dbReference>
<dbReference type="GO" id="GO:0003924">
    <property type="term" value="F:GTPase activity"/>
    <property type="evidence" value="ECO:0007669"/>
    <property type="project" value="InterPro"/>
</dbReference>
<dbReference type="GO" id="GO:1990856">
    <property type="term" value="F:methionyl-initiator methionine tRNA binding"/>
    <property type="evidence" value="ECO:0000250"/>
    <property type="project" value="UniProtKB"/>
</dbReference>
<dbReference type="GO" id="GO:0008168">
    <property type="term" value="F:methyltransferase activity"/>
    <property type="evidence" value="ECO:0007669"/>
    <property type="project" value="UniProtKB-KW"/>
</dbReference>
<dbReference type="GO" id="GO:0003743">
    <property type="term" value="F:translation initiation factor activity"/>
    <property type="evidence" value="ECO:0007669"/>
    <property type="project" value="UniProtKB-KW"/>
</dbReference>
<dbReference type="GO" id="GO:0002183">
    <property type="term" value="P:cytoplasmic translational initiation"/>
    <property type="evidence" value="ECO:0000250"/>
    <property type="project" value="UniProtKB"/>
</dbReference>
<dbReference type="GO" id="GO:0001731">
    <property type="term" value="P:formation of translation preinitiation complex"/>
    <property type="evidence" value="ECO:0007669"/>
    <property type="project" value="TreeGrafter"/>
</dbReference>
<dbReference type="GO" id="GO:0032259">
    <property type="term" value="P:methylation"/>
    <property type="evidence" value="ECO:0007669"/>
    <property type="project" value="UniProtKB-KW"/>
</dbReference>
<dbReference type="CDD" id="cd01888">
    <property type="entry name" value="eIF2_gamma"/>
    <property type="match status" value="1"/>
</dbReference>
<dbReference type="CDD" id="cd03688">
    <property type="entry name" value="eIF2_gamma_II"/>
    <property type="match status" value="1"/>
</dbReference>
<dbReference type="CDD" id="cd15490">
    <property type="entry name" value="eIF2_gamma_III"/>
    <property type="match status" value="1"/>
</dbReference>
<dbReference type="FunFam" id="2.40.30.10:FF:000009">
    <property type="entry name" value="Eukaryotic translation initiation factor 2 subunit gamma"/>
    <property type="match status" value="1"/>
</dbReference>
<dbReference type="FunFam" id="3.40.50.300:FF:000065">
    <property type="entry name" value="Eukaryotic translation initiation factor 2 subunit gamma"/>
    <property type="match status" value="1"/>
</dbReference>
<dbReference type="FunFam" id="2.40.30.10:FF:000075">
    <property type="entry name" value="Translation initiation factor 2 subunit gamma"/>
    <property type="match status" value="1"/>
</dbReference>
<dbReference type="Gene3D" id="3.40.50.300">
    <property type="entry name" value="P-loop containing nucleotide triphosphate hydrolases"/>
    <property type="match status" value="1"/>
</dbReference>
<dbReference type="Gene3D" id="2.40.30.10">
    <property type="entry name" value="Translation factors"/>
    <property type="match status" value="2"/>
</dbReference>
<dbReference type="InterPro" id="IPR004161">
    <property type="entry name" value="EFTu-like_2"/>
</dbReference>
<dbReference type="InterPro" id="IPR050543">
    <property type="entry name" value="eIF2G"/>
</dbReference>
<dbReference type="InterPro" id="IPR015256">
    <property type="entry name" value="eIF2g_C"/>
</dbReference>
<dbReference type="InterPro" id="IPR044127">
    <property type="entry name" value="eIF2g_dom_2"/>
</dbReference>
<dbReference type="InterPro" id="IPR044128">
    <property type="entry name" value="eIF2g_GTP-bd"/>
</dbReference>
<dbReference type="InterPro" id="IPR027417">
    <property type="entry name" value="P-loop_NTPase"/>
</dbReference>
<dbReference type="InterPro" id="IPR000795">
    <property type="entry name" value="T_Tr_GTP-bd_dom"/>
</dbReference>
<dbReference type="InterPro" id="IPR009000">
    <property type="entry name" value="Transl_B-barrel_sf"/>
</dbReference>
<dbReference type="InterPro" id="IPR009001">
    <property type="entry name" value="Transl_elong_EF1A/Init_IF2_C"/>
</dbReference>
<dbReference type="NCBIfam" id="NF003077">
    <property type="entry name" value="PRK04000.1"/>
    <property type="match status" value="1"/>
</dbReference>
<dbReference type="PANTHER" id="PTHR42854">
    <property type="entry name" value="EUKARYOTIC TRANSLATION INITIATION FACTOR 2 SUBUNIT 3 FAMILY MEMBER"/>
    <property type="match status" value="1"/>
</dbReference>
<dbReference type="PANTHER" id="PTHR42854:SF3">
    <property type="entry name" value="EUKARYOTIC TRANSLATION INITIATION FACTOR 2 SUBUNIT 3-RELATED"/>
    <property type="match status" value="1"/>
</dbReference>
<dbReference type="Pfam" id="PF09173">
    <property type="entry name" value="eIF2_C"/>
    <property type="match status" value="1"/>
</dbReference>
<dbReference type="Pfam" id="PF00009">
    <property type="entry name" value="GTP_EFTU"/>
    <property type="match status" value="1"/>
</dbReference>
<dbReference type="Pfam" id="PF03144">
    <property type="entry name" value="GTP_EFTU_D2"/>
    <property type="match status" value="1"/>
</dbReference>
<dbReference type="PRINTS" id="PR00315">
    <property type="entry name" value="ELONGATNFCT"/>
</dbReference>
<dbReference type="SUPFAM" id="SSF50465">
    <property type="entry name" value="EF-Tu/eEF-1alpha/eIF2-gamma C-terminal domain"/>
    <property type="match status" value="1"/>
</dbReference>
<dbReference type="SUPFAM" id="SSF52540">
    <property type="entry name" value="P-loop containing nucleoside triphosphate hydrolases"/>
    <property type="match status" value="1"/>
</dbReference>
<dbReference type="SUPFAM" id="SSF50447">
    <property type="entry name" value="Translation proteins"/>
    <property type="match status" value="1"/>
</dbReference>
<dbReference type="PROSITE" id="PS51722">
    <property type="entry name" value="G_TR_2"/>
    <property type="match status" value="1"/>
</dbReference>
<name>IF2G_CRYNH</name>
<evidence type="ECO:0000250" key="1">
    <source>
        <dbReference type="UniProtKB" id="P32481"/>
    </source>
</evidence>
<evidence type="ECO:0000250" key="2">
    <source>
        <dbReference type="UniProtKB" id="Q09130"/>
    </source>
</evidence>
<evidence type="ECO:0000255" key="3">
    <source>
        <dbReference type="PROSITE-ProRule" id="PRU01059"/>
    </source>
</evidence>
<evidence type="ECO:0000269" key="4">
    <source>
    </source>
</evidence>
<feature type="chain" id="PRO_0000449277" description="Eukaryotic translation initiation factor 2 subunit gamma">
    <location>
        <begin position="1"/>
        <end position="473"/>
    </location>
</feature>
<feature type="domain" description="tr-type G" evidence="3">
    <location>
        <begin position="40"/>
        <end position="250"/>
    </location>
</feature>
<feature type="region of interest" description="G1" evidence="3">
    <location>
        <begin position="49"/>
        <end position="56"/>
    </location>
</feature>
<feature type="region of interest" description="G2" evidence="3">
    <location>
        <begin position="77"/>
        <end position="81"/>
    </location>
</feature>
<feature type="region of interest" description="G3" evidence="3">
    <location>
        <begin position="135"/>
        <end position="138"/>
    </location>
</feature>
<feature type="region of interest" description="G4" evidence="3">
    <location>
        <begin position="193"/>
        <end position="196"/>
    </location>
</feature>
<feature type="region of interest" description="G5" evidence="3">
    <location>
        <begin position="228"/>
        <end position="230"/>
    </location>
</feature>
<feature type="region of interest" description="Interacts with CDC123" evidence="1">
    <location>
        <begin position="458"/>
        <end position="470"/>
    </location>
</feature>
<feature type="binding site" evidence="1">
    <location>
        <begin position="52"/>
        <end position="57"/>
    </location>
    <ligand>
        <name>GTP</name>
        <dbReference type="ChEBI" id="CHEBI:37565"/>
    </ligand>
</feature>
<feature type="binding site" evidence="1">
    <location>
        <begin position="193"/>
        <end position="196"/>
    </location>
    <ligand>
        <name>GTP</name>
        <dbReference type="ChEBI" id="CHEBI:37565"/>
    </ligand>
</feature>
<feature type="binding site" evidence="1">
    <location>
        <begin position="228"/>
        <end position="230"/>
    </location>
    <ligand>
        <name>GTP</name>
        <dbReference type="ChEBI" id="CHEBI:37565"/>
    </ligand>
</feature>
<protein>
    <recommendedName>
        <fullName>Eukaryotic translation initiation factor 2 subunit gamma</fullName>
        <shortName>eIF2-gamma</shortName>
        <ecNumber evidence="1">3.6.5.3</ecNumber>
    </recommendedName>
</protein>
<reference key="1">
    <citation type="journal article" date="2014" name="PLoS Genet.">
        <title>Analysis of the genome and transcriptome of Cryptococcus neoformans var. grubii reveals complex RNA expression and microevolution leading to virulence attenuation.</title>
        <authorList>
            <person name="Janbon G."/>
            <person name="Ormerod K.L."/>
            <person name="Paulet D."/>
            <person name="Byrnes E.J. III"/>
            <person name="Yadav V."/>
            <person name="Chatterjee G."/>
            <person name="Mullapudi N."/>
            <person name="Hon C.-C."/>
            <person name="Billmyre R.B."/>
            <person name="Brunel F."/>
            <person name="Bahn Y.-S."/>
            <person name="Chen W."/>
            <person name="Chen Y."/>
            <person name="Chow E.W.L."/>
            <person name="Coppee J.-Y."/>
            <person name="Floyd-Averette A."/>
            <person name="Gaillardin C."/>
            <person name="Gerik K.J."/>
            <person name="Goldberg J."/>
            <person name="Gonzalez-Hilarion S."/>
            <person name="Gujja S."/>
            <person name="Hamlin J.L."/>
            <person name="Hsueh Y.-P."/>
            <person name="Ianiri G."/>
            <person name="Jones S."/>
            <person name="Kodira C.D."/>
            <person name="Kozubowski L."/>
            <person name="Lam W."/>
            <person name="Marra M."/>
            <person name="Mesner L.D."/>
            <person name="Mieczkowski P.A."/>
            <person name="Moyrand F."/>
            <person name="Nielsen K."/>
            <person name="Proux C."/>
            <person name="Rossignol T."/>
            <person name="Schein J.E."/>
            <person name="Sun S."/>
            <person name="Wollschlaeger C."/>
            <person name="Wood I.A."/>
            <person name="Zeng Q."/>
            <person name="Neuveglise C."/>
            <person name="Newlon C.S."/>
            <person name="Perfect J.R."/>
            <person name="Lodge J.K."/>
            <person name="Idnurm A."/>
            <person name="Stajich J.E."/>
            <person name="Kronstad J.W."/>
            <person name="Sanyal K."/>
            <person name="Heitman J."/>
            <person name="Fraser J.A."/>
            <person name="Cuomo C.A."/>
            <person name="Dietrich F.S."/>
        </authorList>
    </citation>
    <scope>NUCLEOTIDE SEQUENCE [LARGE SCALE GENOMIC DNA]</scope>
    <source>
        <strain>H99 / ATCC 208821 / CBS 10515 / FGSC 9487</strain>
    </source>
</reference>
<reference key="2">
    <citation type="journal article" date="2018" name="Sci. Rep.">
        <title>HDAC genes play distinct and redundant roles in Cryptococcus neoformans virulence.</title>
        <authorList>
            <person name="Brandao F."/>
            <person name="Esher S.K."/>
            <person name="Ost K.S."/>
            <person name="Pianalto K."/>
            <person name="Nichols C.B."/>
            <person name="Fernandes L."/>
            <person name="Bocca A.L."/>
            <person name="Pocas-Fonseca M.J."/>
            <person name="Alspaugh J.A."/>
        </authorList>
    </citation>
    <scope>INDUCTION</scope>
</reference>
<sequence length="473" mass="50373">MSAINDPIAAASSGPSEPVQEVQVDVTKLTALSPEVISKQATINIGTIGHVAHGKSSTVRAISGVQTVRFKNELERNITIKLGYANAKIYKCQNPDCPPPSCFKSYPSSKEAHPKCERPGCDGRMDLQRHVSFVDCPGHDILMATMLTGAAVMNGALLLIAGNESCPQPQTGEHLAALEIIGVDPKNIVILQNKMDLVRESEAMEHCESIKKFVEGTTARLAPIIPVSAQLKFNIDAVVAAICNIAPPNYDFSADPRMVVIRSFDVNKPGAGVDELKGGVAGGSILQGVFKVGQEVEIRPGLITRDANGVCTCRPLRSRIVSLHAEQNHLQFAVPGGLIGVGTLVDPALCRADRLLGMVMSSVGKGPSIYVEIRAEVFLLRRLLGVKTDDSKKAKVGKLVVGETLFVNIGASQTGGRITAVKGGDVSIALTTPACCEKGEKIALSRRIDKHWRLIGWGKVRSGGTLCEVVDPE</sequence>